<proteinExistence type="inferred from homology"/>
<feature type="chain" id="PRO_0000231797" description="Pyridoxine 5'-phosphate synthase">
    <location>
        <begin position="1"/>
        <end position="235"/>
    </location>
</feature>
<feature type="active site" description="Proton acceptor" evidence="1">
    <location>
        <position position="42"/>
    </location>
</feature>
<feature type="active site" description="Proton acceptor" evidence="1">
    <location>
        <position position="69"/>
    </location>
</feature>
<feature type="active site" description="Proton donor" evidence="1">
    <location>
        <position position="189"/>
    </location>
</feature>
<feature type="binding site" evidence="1">
    <location>
        <position position="6"/>
    </location>
    <ligand>
        <name>3-amino-2-oxopropyl phosphate</name>
        <dbReference type="ChEBI" id="CHEBI:57279"/>
    </ligand>
</feature>
<feature type="binding site" evidence="1">
    <location>
        <begin position="8"/>
        <end position="9"/>
    </location>
    <ligand>
        <name>1-deoxy-D-xylulose 5-phosphate</name>
        <dbReference type="ChEBI" id="CHEBI:57792"/>
    </ligand>
</feature>
<feature type="binding site" evidence="1">
    <location>
        <position position="17"/>
    </location>
    <ligand>
        <name>3-amino-2-oxopropyl phosphate</name>
        <dbReference type="ChEBI" id="CHEBI:57279"/>
    </ligand>
</feature>
<feature type="binding site" evidence="1">
    <location>
        <position position="44"/>
    </location>
    <ligand>
        <name>1-deoxy-D-xylulose 5-phosphate</name>
        <dbReference type="ChEBI" id="CHEBI:57792"/>
    </ligand>
</feature>
<feature type="binding site" evidence="1">
    <location>
        <position position="49"/>
    </location>
    <ligand>
        <name>1-deoxy-D-xylulose 5-phosphate</name>
        <dbReference type="ChEBI" id="CHEBI:57792"/>
    </ligand>
</feature>
<feature type="binding site" evidence="1">
    <location>
        <position position="99"/>
    </location>
    <ligand>
        <name>1-deoxy-D-xylulose 5-phosphate</name>
        <dbReference type="ChEBI" id="CHEBI:57792"/>
    </ligand>
</feature>
<feature type="binding site" evidence="1">
    <location>
        <position position="190"/>
    </location>
    <ligand>
        <name>3-amino-2-oxopropyl phosphate</name>
        <dbReference type="ChEBI" id="CHEBI:57279"/>
    </ligand>
</feature>
<feature type="binding site" evidence="1">
    <location>
        <begin position="211"/>
        <end position="212"/>
    </location>
    <ligand>
        <name>3-amino-2-oxopropyl phosphate</name>
        <dbReference type="ChEBI" id="CHEBI:57279"/>
    </ligand>
</feature>
<feature type="site" description="Transition state stabilizer" evidence="1">
    <location>
        <position position="150"/>
    </location>
</feature>
<gene>
    <name evidence="1" type="primary">pdxJ</name>
    <name type="ordered locus">Cag_0484</name>
</gene>
<protein>
    <recommendedName>
        <fullName evidence="1">Pyridoxine 5'-phosphate synthase</fullName>
        <shortName evidence="1">PNP synthase</shortName>
        <ecNumber evidence="1">2.6.99.2</ecNumber>
    </recommendedName>
</protein>
<sequence>MRLAVNIDHVATLRNARGEFHPDPVEAALIAEQAGAAGIVCHLREDRRHIKDDDLRRLRAAVTTKLDLEMAMTEELQAIALATKPELITLVPEKREELTTEGGFDIVRHFDTLKAYLQPFRSAGIEVSLFIEPDKQAIELAAQAGADIVELHTGLYALKAGEAQEEELTRIGNAAAFARNIGLKVVAGHGLNYSNIAPFRNIVEIEEVSIGHAIITRAIFSGLEGAVREMVALIR</sequence>
<accession>Q3ATB8</accession>
<keyword id="KW-0963">Cytoplasm</keyword>
<keyword id="KW-0664">Pyridoxine biosynthesis</keyword>
<keyword id="KW-0808">Transferase</keyword>
<organism>
    <name type="scientific">Chlorobium chlorochromatii (strain CaD3)</name>
    <dbReference type="NCBI Taxonomy" id="340177"/>
    <lineage>
        <taxon>Bacteria</taxon>
        <taxon>Pseudomonadati</taxon>
        <taxon>Chlorobiota</taxon>
        <taxon>Chlorobiia</taxon>
        <taxon>Chlorobiales</taxon>
        <taxon>Chlorobiaceae</taxon>
        <taxon>Chlorobium/Pelodictyon group</taxon>
        <taxon>Chlorobium</taxon>
    </lineage>
</organism>
<evidence type="ECO:0000255" key="1">
    <source>
        <dbReference type="HAMAP-Rule" id="MF_00279"/>
    </source>
</evidence>
<dbReference type="EC" id="2.6.99.2" evidence="1"/>
<dbReference type="EMBL" id="CP000108">
    <property type="protein sequence ID" value="ABB27757.1"/>
    <property type="molecule type" value="Genomic_DNA"/>
</dbReference>
<dbReference type="SMR" id="Q3ATB8"/>
<dbReference type="STRING" id="340177.Cag_0484"/>
<dbReference type="KEGG" id="cch:Cag_0484"/>
<dbReference type="eggNOG" id="COG0854">
    <property type="taxonomic scope" value="Bacteria"/>
</dbReference>
<dbReference type="HOGENOM" id="CLU_074563_0_0_10"/>
<dbReference type="OrthoDB" id="9806590at2"/>
<dbReference type="UniPathway" id="UPA00244">
    <property type="reaction ID" value="UER00313"/>
</dbReference>
<dbReference type="GO" id="GO:0005829">
    <property type="term" value="C:cytosol"/>
    <property type="evidence" value="ECO:0007669"/>
    <property type="project" value="TreeGrafter"/>
</dbReference>
<dbReference type="GO" id="GO:0033856">
    <property type="term" value="F:pyridoxine 5'-phosphate synthase activity"/>
    <property type="evidence" value="ECO:0007669"/>
    <property type="project" value="UniProtKB-EC"/>
</dbReference>
<dbReference type="GO" id="GO:0008615">
    <property type="term" value="P:pyridoxine biosynthetic process"/>
    <property type="evidence" value="ECO:0007669"/>
    <property type="project" value="UniProtKB-UniRule"/>
</dbReference>
<dbReference type="CDD" id="cd00003">
    <property type="entry name" value="PNPsynthase"/>
    <property type="match status" value="1"/>
</dbReference>
<dbReference type="Gene3D" id="3.20.20.70">
    <property type="entry name" value="Aldolase class I"/>
    <property type="match status" value="1"/>
</dbReference>
<dbReference type="HAMAP" id="MF_00279">
    <property type="entry name" value="PdxJ"/>
    <property type="match status" value="1"/>
</dbReference>
<dbReference type="InterPro" id="IPR013785">
    <property type="entry name" value="Aldolase_TIM"/>
</dbReference>
<dbReference type="InterPro" id="IPR004569">
    <property type="entry name" value="PyrdxlP_synth_PdxJ"/>
</dbReference>
<dbReference type="InterPro" id="IPR036130">
    <property type="entry name" value="Pyridoxine-5'_phos_synth"/>
</dbReference>
<dbReference type="NCBIfam" id="TIGR00559">
    <property type="entry name" value="pdxJ"/>
    <property type="match status" value="1"/>
</dbReference>
<dbReference type="NCBIfam" id="NF003625">
    <property type="entry name" value="PRK05265.1-3"/>
    <property type="match status" value="1"/>
</dbReference>
<dbReference type="NCBIfam" id="NF003627">
    <property type="entry name" value="PRK05265.1-5"/>
    <property type="match status" value="1"/>
</dbReference>
<dbReference type="PANTHER" id="PTHR30456">
    <property type="entry name" value="PYRIDOXINE 5'-PHOSPHATE SYNTHASE"/>
    <property type="match status" value="1"/>
</dbReference>
<dbReference type="PANTHER" id="PTHR30456:SF0">
    <property type="entry name" value="PYRIDOXINE 5'-PHOSPHATE SYNTHASE"/>
    <property type="match status" value="1"/>
</dbReference>
<dbReference type="Pfam" id="PF03740">
    <property type="entry name" value="PdxJ"/>
    <property type="match status" value="1"/>
</dbReference>
<dbReference type="SUPFAM" id="SSF63892">
    <property type="entry name" value="Pyridoxine 5'-phosphate synthase"/>
    <property type="match status" value="1"/>
</dbReference>
<comment type="function">
    <text evidence="1">Catalyzes the complicated ring closure reaction between the two acyclic compounds 1-deoxy-D-xylulose-5-phosphate (DXP) and 3-amino-2-oxopropyl phosphate (1-amino-acetone-3-phosphate or AAP) to form pyridoxine 5'-phosphate (PNP) and inorganic phosphate.</text>
</comment>
<comment type="catalytic activity">
    <reaction evidence="1">
        <text>3-amino-2-oxopropyl phosphate + 1-deoxy-D-xylulose 5-phosphate = pyridoxine 5'-phosphate + phosphate + 2 H2O + H(+)</text>
        <dbReference type="Rhea" id="RHEA:15265"/>
        <dbReference type="ChEBI" id="CHEBI:15377"/>
        <dbReference type="ChEBI" id="CHEBI:15378"/>
        <dbReference type="ChEBI" id="CHEBI:43474"/>
        <dbReference type="ChEBI" id="CHEBI:57279"/>
        <dbReference type="ChEBI" id="CHEBI:57792"/>
        <dbReference type="ChEBI" id="CHEBI:58589"/>
        <dbReference type="EC" id="2.6.99.2"/>
    </reaction>
</comment>
<comment type="pathway">
    <text evidence="1">Cofactor biosynthesis; pyridoxine 5'-phosphate biosynthesis; pyridoxine 5'-phosphate from D-erythrose 4-phosphate: step 5/5.</text>
</comment>
<comment type="subunit">
    <text evidence="1">Homooctamer; tetramer of dimers.</text>
</comment>
<comment type="subcellular location">
    <subcellularLocation>
        <location evidence="1">Cytoplasm</location>
    </subcellularLocation>
</comment>
<comment type="similarity">
    <text evidence="1">Belongs to the PNP synthase family.</text>
</comment>
<name>PDXJ_CHLCH</name>
<reference key="1">
    <citation type="submission" date="2005-08" db="EMBL/GenBank/DDBJ databases">
        <title>Complete sequence of Chlorobium chlorochromatii CaD3.</title>
        <authorList>
            <consortium name="US DOE Joint Genome Institute"/>
            <person name="Copeland A."/>
            <person name="Lucas S."/>
            <person name="Lapidus A."/>
            <person name="Barry K."/>
            <person name="Detter J.C."/>
            <person name="Glavina T."/>
            <person name="Hammon N."/>
            <person name="Israni S."/>
            <person name="Pitluck S."/>
            <person name="Bryant D."/>
            <person name="Schmutz J."/>
            <person name="Larimer F."/>
            <person name="Land M."/>
            <person name="Kyrpides N."/>
            <person name="Ivanova N."/>
            <person name="Richardson P."/>
        </authorList>
    </citation>
    <scope>NUCLEOTIDE SEQUENCE [LARGE SCALE GENOMIC DNA]</scope>
    <source>
        <strain>CaD3</strain>
    </source>
</reference>